<geneLocation type="chloroplast"/>
<dbReference type="EMBL" id="M37322">
    <property type="protein sequence ID" value="AAB02425.1"/>
    <property type="molecule type" value="Genomic_DNA"/>
</dbReference>
<dbReference type="GO" id="GO:0009507">
    <property type="term" value="C:chloroplast"/>
    <property type="evidence" value="ECO:0007669"/>
    <property type="project" value="UniProtKB-SubCell"/>
</dbReference>
<dbReference type="GO" id="GO:1990904">
    <property type="term" value="C:ribonucleoprotein complex"/>
    <property type="evidence" value="ECO:0007669"/>
    <property type="project" value="UniProtKB-KW"/>
</dbReference>
<dbReference type="GO" id="GO:0005840">
    <property type="term" value="C:ribosome"/>
    <property type="evidence" value="ECO:0007669"/>
    <property type="project" value="UniProtKB-KW"/>
</dbReference>
<dbReference type="GO" id="GO:0019843">
    <property type="term" value="F:rRNA binding"/>
    <property type="evidence" value="ECO:0007669"/>
    <property type="project" value="UniProtKB-KW"/>
</dbReference>
<accession>P18550</accession>
<feature type="initiator methionine" description="Removed" evidence="1">
    <location>
        <position position="1"/>
    </location>
</feature>
<feature type="chain" id="PRO_0000129980" description="Small ribosomal subunit protein uS19c">
    <location>
        <begin position="2"/>
        <end position="24" status="greater than"/>
    </location>
</feature>
<feature type="non-terminal residue">
    <location>
        <position position="24"/>
    </location>
</feature>
<gene>
    <name type="primary">rps19</name>
</gene>
<keyword id="KW-0150">Chloroplast</keyword>
<keyword id="KW-0934">Plastid</keyword>
<keyword id="KW-0687">Ribonucleoprotein</keyword>
<keyword id="KW-0689">Ribosomal protein</keyword>
<keyword id="KW-0694">RNA-binding</keyword>
<keyword id="KW-0699">rRNA-binding</keyword>
<organism>
    <name type="scientific">Petunia hybrida</name>
    <name type="common">Petunia</name>
    <dbReference type="NCBI Taxonomy" id="4102"/>
    <lineage>
        <taxon>Eukaryota</taxon>
        <taxon>Viridiplantae</taxon>
        <taxon>Streptophyta</taxon>
        <taxon>Embryophyta</taxon>
        <taxon>Tracheophyta</taxon>
        <taxon>Spermatophyta</taxon>
        <taxon>Magnoliopsida</taxon>
        <taxon>eudicotyledons</taxon>
        <taxon>Gunneridae</taxon>
        <taxon>Pentapetalae</taxon>
        <taxon>asterids</taxon>
        <taxon>lamiids</taxon>
        <taxon>Solanales</taxon>
        <taxon>Solanaceae</taxon>
        <taxon>Petunioideae</taxon>
        <taxon>Petunia</taxon>
    </lineage>
</organism>
<reference key="1">
    <citation type="journal article" date="1988" name="Curr. Genet.">
        <title>Sequence analysis of the junction of the large single copy region and the large inverted repeat in the petunia chloroplast genome.</title>
        <authorList>
            <person name="Aldrich J."/>
            <person name="Cherney B.W."/>
            <person name="Williams C."/>
            <person name="Merlin E."/>
        </authorList>
    </citation>
    <scope>NUCLEOTIDE SEQUENCE [GENOMIC DNA]</scope>
</reference>
<sequence>MTRSLKKNPFVANHLLNKIDKLNT</sequence>
<protein>
    <recommendedName>
        <fullName evidence="2">Small ribosomal subunit protein uS19c</fullName>
    </recommendedName>
    <alternativeName>
        <fullName>30S ribosomal protein S19, chloroplastic</fullName>
    </alternativeName>
</protein>
<proteinExistence type="inferred from homology"/>
<comment type="function">
    <text evidence="1">Protein S19 forms a complex with S13 that binds strongly to the 16S ribosomal RNA.</text>
</comment>
<comment type="subcellular location">
    <subcellularLocation>
        <location>Plastid</location>
        <location>Chloroplast</location>
    </subcellularLocation>
</comment>
<comment type="similarity">
    <text evidence="2">Belongs to the universal ribosomal protein uS19 family.</text>
</comment>
<evidence type="ECO:0000250" key="1"/>
<evidence type="ECO:0000305" key="2"/>
<name>RR19_PETHY</name>